<name>TAT_HV1Y2</name>
<keyword id="KW-0007">Acetylation</keyword>
<keyword id="KW-0010">Activator</keyword>
<keyword id="KW-0014">AIDS</keyword>
<keyword id="KW-0025">Alternative splicing</keyword>
<keyword id="KW-0053">Apoptosis</keyword>
<keyword id="KW-1035">Host cytoplasm</keyword>
<keyword id="KW-1048">Host nucleus</keyword>
<keyword id="KW-0945">Host-virus interaction</keyword>
<keyword id="KW-1090">Inhibition of host innate immune response by virus</keyword>
<keyword id="KW-1114">Inhibition of host interferon signaling pathway by virus</keyword>
<keyword id="KW-0922">Interferon antiviral system evasion</keyword>
<keyword id="KW-1017">Isopeptide bond</keyword>
<keyword id="KW-0479">Metal-binding</keyword>
<keyword id="KW-0488">Methylation</keyword>
<keyword id="KW-1122">Modulation of host chromatin by virus</keyword>
<keyword id="KW-1126">Modulation of host PP1 activity by virus</keyword>
<keyword id="KW-0597">Phosphoprotein</keyword>
<keyword id="KW-0694">RNA-binding</keyword>
<keyword id="KW-0964">Secreted</keyword>
<keyword id="KW-0804">Transcription</keyword>
<keyword id="KW-0805">Transcription regulation</keyword>
<keyword id="KW-0832">Ubl conjugation</keyword>
<keyword id="KW-0899">Viral immunoevasion</keyword>
<keyword id="KW-0862">Zinc</keyword>
<reference key="1">
    <citation type="journal article" date="1992" name="J. Virol.">
        <title>Complete nucleotide sequence, genome organization, and biological properties of human immunodeficiency virus type 1 in vivo: evidence for limited defectiveness and complementation.</title>
        <authorList>
            <person name="Li Y."/>
            <person name="Hui H."/>
            <person name="Burgess C.J."/>
            <person name="Price R.W."/>
            <person name="Sharp P.M."/>
            <person name="Hahn B.H."/>
            <person name="Shaw G.M."/>
        </authorList>
    </citation>
    <scope>NUCLEOTIDE SEQUENCE [GENOMIC RNA]</scope>
</reference>
<reference key="2">
    <citation type="journal article" date="2005" name="Microbes Infect.">
        <title>Decoding Tat: the biology of HIV Tat posttranslational modifications.</title>
        <authorList>
            <person name="Hetzer C."/>
            <person name="Dormeyer W."/>
            <person name="Schnolzer M."/>
            <person name="Ott M."/>
        </authorList>
    </citation>
    <scope>REVIEW</scope>
    <scope>ALTERNATIVE SPLICING</scope>
</reference>
<reference key="3">
    <citation type="journal article" date="2006" name="Front. Biosci.">
        <title>The multiple functions of HIV-1 Tat: proliferation versus apoptosis.</title>
        <authorList>
            <person name="Peruzzi F."/>
        </authorList>
    </citation>
    <scope>REVIEW</scope>
</reference>
<reference key="4">
    <citation type="journal article" date="2006" name="Microbes Infect.">
        <title>HIV tat and neurotoxicity.</title>
        <authorList>
            <person name="King J.E."/>
            <person name="Eugenin E.A."/>
            <person name="Buckner C.M."/>
            <person name="Berman J.W."/>
        </authorList>
    </citation>
    <scope>REVIEW</scope>
</reference>
<feature type="chain" id="PRO_0000085340" description="Protein Tat">
    <location>
        <begin position="1"/>
        <end position="101"/>
    </location>
</feature>
<feature type="region of interest" description="Transactivation" evidence="1">
    <location>
        <begin position="1"/>
        <end position="48"/>
    </location>
</feature>
<feature type="region of interest" description="Interaction with human CREBBP" evidence="1">
    <location>
        <begin position="1"/>
        <end position="24"/>
    </location>
</feature>
<feature type="region of interest" description="Cysteine-rich" evidence="1">
    <location>
        <begin position="22"/>
        <end position="37"/>
    </location>
</feature>
<feature type="region of interest" description="Core" evidence="1">
    <location>
        <begin position="38"/>
        <end position="48"/>
    </location>
</feature>
<feature type="region of interest" description="Disordered" evidence="2">
    <location>
        <begin position="47"/>
        <end position="101"/>
    </location>
</feature>
<feature type="region of interest" description="Interaction with the host capping enzyme RNGTT" evidence="1">
    <location>
        <begin position="49"/>
        <end position="86"/>
    </location>
</feature>
<feature type="short sequence motif" description="Nuclear localization signal, RNA-binding (TAR), and protein transduction" evidence="1">
    <location>
        <begin position="49"/>
        <end position="57"/>
    </location>
</feature>
<feature type="short sequence motif" description="Cell attachment site" evidence="1">
    <location>
        <begin position="78"/>
        <end position="80"/>
    </location>
</feature>
<feature type="compositionally biased region" description="Basic residues" evidence="2">
    <location>
        <begin position="48"/>
        <end position="57"/>
    </location>
</feature>
<feature type="compositionally biased region" description="Polar residues" evidence="2">
    <location>
        <begin position="61"/>
        <end position="77"/>
    </location>
</feature>
<feature type="compositionally biased region" description="Basic and acidic residues" evidence="2">
    <location>
        <begin position="86"/>
        <end position="101"/>
    </location>
</feature>
<feature type="binding site" evidence="1">
    <location>
        <position position="22"/>
    </location>
    <ligand>
        <name>Zn(2+)</name>
        <dbReference type="ChEBI" id="CHEBI:29105"/>
        <label>1</label>
    </ligand>
</feature>
<feature type="binding site" evidence="1">
    <location>
        <position position="25"/>
    </location>
    <ligand>
        <name>Zn(2+)</name>
        <dbReference type="ChEBI" id="CHEBI:29105"/>
        <label>2</label>
    </ligand>
</feature>
<feature type="binding site" evidence="1">
    <location>
        <position position="27"/>
    </location>
    <ligand>
        <name>Zn(2+)</name>
        <dbReference type="ChEBI" id="CHEBI:29105"/>
        <label>2</label>
    </ligand>
</feature>
<feature type="binding site" evidence="1">
    <location>
        <position position="30"/>
    </location>
    <ligand>
        <name>Zn(2+)</name>
        <dbReference type="ChEBI" id="CHEBI:29105"/>
        <label>2</label>
    </ligand>
</feature>
<feature type="binding site" evidence="1">
    <location>
        <position position="33"/>
    </location>
    <ligand>
        <name>Zn(2+)</name>
        <dbReference type="ChEBI" id="CHEBI:29105"/>
        <label>1</label>
    </ligand>
</feature>
<feature type="binding site" evidence="1">
    <location>
        <position position="34"/>
    </location>
    <ligand>
        <name>Zn(2+)</name>
        <dbReference type="ChEBI" id="CHEBI:29105"/>
        <label>1</label>
    </ligand>
</feature>
<feature type="binding site" evidence="1">
    <location>
        <position position="37"/>
    </location>
    <ligand>
        <name>Zn(2+)</name>
        <dbReference type="ChEBI" id="CHEBI:29105"/>
        <label>1</label>
    </ligand>
</feature>
<feature type="site" description="Essential for Tat translocation through the endosomal membrane" evidence="1">
    <location>
        <position position="11"/>
    </location>
</feature>
<feature type="modified residue" description="N6-acetyllysine; by host PCAF" evidence="1">
    <location>
        <position position="28"/>
    </location>
</feature>
<feature type="modified residue" description="N6-acetyllysine; by host EP300 and GCN5L2" evidence="1">
    <location>
        <position position="50"/>
    </location>
</feature>
<feature type="modified residue" description="N6-acetyllysine; by host EP300 and GCN5L2" evidence="1">
    <location>
        <position position="51"/>
    </location>
</feature>
<feature type="modified residue" description="Asymmetric dimethylarginine; by host PRMT6" evidence="1">
    <location>
        <position position="52"/>
    </location>
</feature>
<feature type="modified residue" description="Asymmetric dimethylarginine; by host PRMT6" evidence="1">
    <location>
        <position position="53"/>
    </location>
</feature>
<feature type="cross-link" description="Glycyl lysine isopeptide (Lys-Gly) (interchain with G-Cter in ubiquitin)" evidence="1">
    <location>
        <position position="71"/>
    </location>
</feature>
<feature type="splice variant" id="VSP_022434" description="In isoform Short.">
    <location>
        <begin position="73"/>
        <end position="101"/>
    </location>
</feature>
<gene>
    <name evidence="1" type="primary">tat</name>
</gene>
<organism>
    <name type="scientific">Human immunodeficiency virus type 1 group M subtype B (isolate YU-2)</name>
    <name type="common">HIV-1</name>
    <dbReference type="NCBI Taxonomy" id="362651"/>
    <lineage>
        <taxon>Viruses</taxon>
        <taxon>Riboviria</taxon>
        <taxon>Pararnavirae</taxon>
        <taxon>Artverviricota</taxon>
        <taxon>Revtraviricetes</taxon>
        <taxon>Ortervirales</taxon>
        <taxon>Retroviridae</taxon>
        <taxon>Orthoretrovirinae</taxon>
        <taxon>Lentivirus</taxon>
        <taxon>Human immunodeficiency virus type 1</taxon>
    </lineage>
</organism>
<accession>P35965</accession>
<sequence>MEPVDPNLEPWKHPGSQPRTACNNCYCKKCCFHCQVCFTKKGLGISYGRKKRRQRRRPPQDSQTHQSSLSKQPTSQLRGDPTGPTESKKKVERETETDPVH</sequence>
<comment type="function">
    <text evidence="1">Transcriptional activator that increases RNA Pol II processivity, thereby increasing the level of full-length viral transcripts. Recognizes a hairpin structure at the 5'-LTR of the nascent viral mRNAs referred to as the transactivation responsive RNA element (TAR) and recruits the cyclin T1-CDK9 complex (P-TEFb complex) that will in turn hyperphosphorylate the RNA polymerase II to allow efficient elongation. The CDK9 component of P-TEFb and other Tat-activated kinases hyperphosphorylate the C-terminus of RNA Pol II that becomes stabilized and much more processive. Other factors such as HTATSF1/Tat-SF1, SUPT5H/SPT5, and HTATIP2 are also important for Tat's function. Besides its effect on RNA Pol II processivity, Tat induces chromatin remodeling of proviral genes by recruiting the histone acetyltransferases (HATs) CREBBP, EP300 and PCAF to the chromatin. This also contributes to the increase in proviral transcription rate, especially when the provirus integrates in transcriptionally silent region of the host genome. To ensure maximal activation of the LTR, Tat mediates nuclear translocation of NF-kappa-B by interacting with host RELA. Through its interaction with host TBP, Tat may also modulate transcription initiation. Tat can reactivate a latently infected cell by penetrating in it and transactivating its LTR promoter. In the cytoplasm, Tat is thought to act as a translational activator of HIV-1 mRNAs.</text>
</comment>
<comment type="function">
    <text evidence="1">Extracellular circulating Tat can be endocytosed by surrounding uninfected cells via the binding to several surface receptors such as CD26, CXCR4, heparan sulfate proteoglycans (HSPG) or LDLR. Neurons are rarely infected, but they internalize Tat via their LDLR. Through its interaction with nuclear HATs, Tat is potentially able to control the acetylation-dependent cellular gene expression. Modulates the expression of many cellular genes involved in cell survival, proliferation or in coding for cytokines or cytokine receptors. Tat plays a role in T-cell and neurons apoptosis. Tat induced neurotoxicity and apoptosis probably contribute to neuroAIDS. Circulating Tat also acts as a chemokine-like and/or growth factor-like molecule that binds to specific receptors on the surface of the cells, affecting many cellular pathways. In the vascular system, Tat binds to ITGAV/ITGB3 and ITGA5/ITGB1 integrins dimers at the surface of endothelial cells and competes with bFGF for heparin-binding sites, leading to an excess of soluble bFGF.</text>
</comment>
<comment type="subunit">
    <text evidence="1">Interacts with host CCNT1. Associates with the P-TEFb complex composed at least of Tat, P-TEFb (CDK9 and CCNT1), TAR RNA, RNA Pol II. Recruits the HATs CREBBP, TAF1/TFIID, EP300, PCAF and GCN5L2. Interacts with host KAT5/Tip60; this interaction targets the latter to degradation. Interacts with the host deacetylase SIRT1. Interacts with host capping enzyme RNGTT; this interaction stimulates RNGTT. Binds to host KDR, and to the host integrins ITGAV/ITGB3 and ITGA5/ITGB1. Interacts with host KPNB1/importin beta-1 without previous binding to KPNA1/importin alpha-1. Interacts with EIF2AK2. Interacts with host nucleosome assembly protein NAP1L1; this interaction may be required for the transport of Tat within the nucleus, since the two proteins interact at the nuclear rim. Interacts with host C1QBP/SF2P32; this interaction involves lysine-acetylated Tat. Interacts with the host chemokine receptors CCR2, CCR3 and CXCR4. Interacts with host DPP4/CD26; this interaction may trigger an anti-proliferative effect. Interacts with host LDLR. Interacts with the host extracellular matrix metalloproteinase MMP1. Interacts with host PRMT6; this interaction mediates Tat's methylation. Interacts with, and is ubiquitinated by MDM2/Hdm2. Interacts with host PSMC3 and HTATIP2. Interacts with STAB1; this interaction may overcome SATB1-mediated repression of IL2 and IL2RA (interleukin) in T cells by binding to the same domain than HDAC1. Interacts (when acetylated) with human CDK13, thereby increasing HIV-1 mRNA splicing and promoting the production of the doubly spliced HIV-1 protein Nef. Interacts with host TBP; this interaction modulates the activity of transcriptional pre-initiation complex. Interacts with host RELA. Interacts with host PLSCR1; this interaction negatively regulates Tat transactivation activity by altering its subcellular distribution.</text>
</comment>
<comment type="subcellular location">
    <subcellularLocation>
        <location evidence="1">Host nucleus</location>
        <location evidence="1">Host nucleolus</location>
    </subcellularLocation>
    <subcellularLocation>
        <location evidence="1">Host cytoplasm</location>
    </subcellularLocation>
    <subcellularLocation>
        <location evidence="1">Secreted</location>
    </subcellularLocation>
    <text evidence="1">Probably localizes to both nuclear and nucleolar compartments. Nuclear localization is mediated through the interaction of the nuclear localization signal with importin KPNB1. Secretion occurs through a Golgi-independent pathway. Tat is released from infected cells to the extracellular space where it remains associated to the cell membrane, or is secreted into the cerebrospinal fluid and sera. Extracellular Tat can be endocytosed by surrounding uninfected cells via binding to several receptors depending on the cell type.</text>
</comment>
<comment type="alternative products">
    <event type="alternative splicing"/>
    <isoform>
        <id>P35965-1</id>
        <name>Long</name>
        <sequence type="displayed"/>
    </isoform>
    <isoform>
        <id>P35965-2</id>
        <name>Short</name>
        <sequence type="described" ref="VSP_022434"/>
    </isoform>
</comment>
<comment type="domain">
    <text evidence="1">The cell attachment site mediates the interaction with ITGAV/ITGB3 and ITGA5/ITGB1 integrins, leading to vascular cell migration and invasion. This interaction also provides endothelial cells with the adhesion signal they require to grow in response to mitogens.</text>
</comment>
<comment type="domain">
    <text evidence="1">The Cys-rich region may bind 2 zinc ions. This region is involved in binding to KAT5.</text>
</comment>
<comment type="domain">
    <text evidence="1">The transactivation domain mediates the interaction with CCNT1, GCN5L2, and MDM2.</text>
</comment>
<comment type="domain">
    <text evidence="1">The Arg-rich RNA-binding region binds the TAR RNA. This region also mediates the nuclear localization through direct binding to KPNB1 and is involved in Tat's transfer across cell membranes (protein transduction). The same region is required for the interaction with EP300, PCAF, EIF2AK2 and KDR.</text>
</comment>
<comment type="PTM">
    <text evidence="1">Asymmetrical arginine methylation by host PRMT6 seems to diminish the transactivation capacity of Tat and affects the interaction with host CCNT1.</text>
</comment>
<comment type="PTM">
    <text evidence="1">Acetylation by EP300, CREBBP, GCN5L2/GCN5 and PCAF regulates the transactivation activity of Tat. EP300-mediated acetylation of Lys-50 promotes dissociation of Tat from the TAR RNA through the competitive binding to PCAF's bromodomain. In addition, the non-acetylated Tat's N-terminus can also interact with PCAF. PCAF-mediated acetylation of Lys-28 enhances Tat's binding to CCNT1. Lys-50 is deacetylated by SIRT1.</text>
</comment>
<comment type="PTM">
    <text evidence="1">Polyubiquitination by host MDM2 does not target Tat to degradation, but activates its transactivation function and fosters interaction with CCNT1 and TAR RNA.</text>
</comment>
<comment type="PTM">
    <text evidence="1">Phosphorylated by EIF2AK2 on serine and threonine residues adjacent to the basic region important for TAR RNA binding and function. Phosphorylation of Tat by EIF2AK2 is dependent on the prior activation of EIF2AK2 by dsRNA.</text>
</comment>
<comment type="miscellaneous">
    <text evidence="1">HIV-1 lineages are divided in three main groups, M (for Major), O (for Outlier), and N (for New, or Non-M, Non-O). The vast majority of strains found worldwide belong to the group M. Group O seems to be endemic to and largely confined to Cameroon and neighboring countries in West Central Africa, where these viruses represent a small minority of HIV-1 strains. The group N is represented by a limited number of isolates from Cameroonian persons. The group M is further subdivided in 9 clades or subtypes (A to D, F to H, J and K).</text>
</comment>
<comment type="miscellaneous">
    <molecule>Isoform Short</molecule>
    <text evidence="3">Expressed in the late stage of the infection cycle, when unspliced viral RNAs are exported to the cytoplasm by the viral Rev protein.</text>
</comment>
<comment type="similarity">
    <text evidence="1">Belongs to the lentiviruses Tat family.</text>
</comment>
<protein>
    <recommendedName>
        <fullName evidence="1">Protein Tat</fullName>
    </recommendedName>
    <alternativeName>
        <fullName evidence="1">Transactivating regulatory protein</fullName>
    </alternativeName>
</protein>
<proteinExistence type="inferred from homology"/>
<evidence type="ECO:0000255" key="1">
    <source>
        <dbReference type="HAMAP-Rule" id="MF_04079"/>
    </source>
</evidence>
<evidence type="ECO:0000256" key="2">
    <source>
        <dbReference type="SAM" id="MobiDB-lite"/>
    </source>
</evidence>
<evidence type="ECO:0000305" key="3"/>
<organismHost>
    <name type="scientific">Homo sapiens</name>
    <name type="common">Human</name>
    <dbReference type="NCBI Taxonomy" id="9606"/>
</organismHost>
<dbReference type="EMBL" id="M93258">
    <property type="status" value="NOT_ANNOTATED_CDS"/>
    <property type="molecule type" value="Genomic_RNA"/>
</dbReference>
<dbReference type="PIR" id="E44001">
    <property type="entry name" value="E44001"/>
</dbReference>
<dbReference type="SMR" id="P35965"/>
<dbReference type="Proteomes" id="UP000007419">
    <property type="component" value="Genome"/>
</dbReference>
<dbReference type="GO" id="GO:0005576">
    <property type="term" value="C:extracellular region"/>
    <property type="evidence" value="ECO:0007669"/>
    <property type="project" value="UniProtKB-SubCell"/>
</dbReference>
<dbReference type="GO" id="GO:0030430">
    <property type="term" value="C:host cell cytoplasm"/>
    <property type="evidence" value="ECO:0007669"/>
    <property type="project" value="UniProtKB-SubCell"/>
</dbReference>
<dbReference type="GO" id="GO:0044196">
    <property type="term" value="C:host cell nucleolus"/>
    <property type="evidence" value="ECO:0007669"/>
    <property type="project" value="UniProtKB-SubCell"/>
</dbReference>
<dbReference type="GO" id="GO:0042805">
    <property type="term" value="F:actinin binding"/>
    <property type="evidence" value="ECO:0007669"/>
    <property type="project" value="UniProtKB-UniRule"/>
</dbReference>
<dbReference type="GO" id="GO:0030332">
    <property type="term" value="F:cyclin binding"/>
    <property type="evidence" value="ECO:0007669"/>
    <property type="project" value="UniProtKB-UniRule"/>
</dbReference>
<dbReference type="GO" id="GO:0046872">
    <property type="term" value="F:metal ion binding"/>
    <property type="evidence" value="ECO:0007669"/>
    <property type="project" value="UniProtKB-UniRule"/>
</dbReference>
<dbReference type="GO" id="GO:0019904">
    <property type="term" value="F:protein domain specific binding"/>
    <property type="evidence" value="ECO:0007669"/>
    <property type="project" value="UniProtKB-UniRule"/>
</dbReference>
<dbReference type="GO" id="GO:0004865">
    <property type="term" value="F:protein serine/threonine phosphatase inhibitor activity"/>
    <property type="evidence" value="ECO:0007669"/>
    <property type="project" value="UniProtKB-KW"/>
</dbReference>
<dbReference type="GO" id="GO:0001070">
    <property type="term" value="F:RNA-binding transcription regulator activity"/>
    <property type="evidence" value="ECO:0007669"/>
    <property type="project" value="UniProtKB-UniRule"/>
</dbReference>
<dbReference type="GO" id="GO:1990970">
    <property type="term" value="F:trans-activation response element binding"/>
    <property type="evidence" value="ECO:0007669"/>
    <property type="project" value="UniProtKB-UniRule"/>
</dbReference>
<dbReference type="GO" id="GO:0006351">
    <property type="term" value="P:DNA-templated transcription"/>
    <property type="evidence" value="ECO:0007669"/>
    <property type="project" value="UniProtKB-UniRule"/>
</dbReference>
<dbReference type="GO" id="GO:0032968">
    <property type="term" value="P:positive regulation of transcription elongation by RNA polymerase II"/>
    <property type="evidence" value="ECO:0007669"/>
    <property type="project" value="UniProtKB-UniRule"/>
</dbReference>
<dbReference type="GO" id="GO:0050434">
    <property type="term" value="P:positive regulation of viral transcription"/>
    <property type="evidence" value="ECO:0007669"/>
    <property type="project" value="UniProtKB-UniRule"/>
</dbReference>
<dbReference type="GO" id="GO:0039525">
    <property type="term" value="P:symbiont-mediated perturbation of host chromatin organization"/>
    <property type="evidence" value="ECO:0007669"/>
    <property type="project" value="UniProtKB-UniRule"/>
</dbReference>
<dbReference type="GO" id="GO:0052170">
    <property type="term" value="P:symbiont-mediated suppression of host innate immune response"/>
    <property type="evidence" value="ECO:0007669"/>
    <property type="project" value="UniProtKB-KW"/>
</dbReference>
<dbReference type="GO" id="GO:0039606">
    <property type="term" value="P:symbiont-mediated suppression of host translation initiation"/>
    <property type="evidence" value="ECO:0007669"/>
    <property type="project" value="UniProtKB-KW"/>
</dbReference>
<dbReference type="GO" id="GO:0039502">
    <property type="term" value="P:symbiont-mediated suppression of host type I interferon-mediated signaling pathway"/>
    <property type="evidence" value="ECO:0007669"/>
    <property type="project" value="UniProtKB-UniRule"/>
</dbReference>
<dbReference type="Gene3D" id="4.10.20.10">
    <property type="entry name" value="Tat domain"/>
    <property type="match status" value="1"/>
</dbReference>
<dbReference type="HAMAP" id="MF_04079">
    <property type="entry name" value="HIV_TAT"/>
    <property type="match status" value="1"/>
</dbReference>
<dbReference type="InterPro" id="IPR001831">
    <property type="entry name" value="IV_Tat"/>
</dbReference>
<dbReference type="InterPro" id="IPR036963">
    <property type="entry name" value="Tat_dom_sf"/>
</dbReference>
<dbReference type="Pfam" id="PF00539">
    <property type="entry name" value="Tat"/>
    <property type="match status" value="1"/>
</dbReference>
<dbReference type="PRINTS" id="PR00055">
    <property type="entry name" value="HIVTATDOMAIN"/>
</dbReference>